<proteinExistence type="predicted"/>
<gene>
    <name type="ordered locus">pXO2-11</name>
    <name type="ordered locus">BXB0010</name>
    <name type="ordered locus">GBAA_pXO2_0010</name>
</gene>
<geneLocation type="plasmid">
    <name>pXO2</name>
</geneLocation>
<protein>
    <recommendedName>
        <fullName>Uncharacterized protein pXO2-11/BXB0010/GBAA_pXO2_0010</fullName>
    </recommendedName>
</protein>
<accession>Q9RN21</accession>
<keyword id="KW-1003">Cell membrane</keyword>
<keyword id="KW-0472">Membrane</keyword>
<keyword id="KW-0614">Plasmid</keyword>
<keyword id="KW-1185">Reference proteome</keyword>
<keyword id="KW-0812">Transmembrane</keyword>
<keyword id="KW-1133">Transmembrane helix</keyword>
<reference key="1">
    <citation type="journal article" date="1999" name="J. Appl. Microbiol.">
        <title>Sequence, assembly and analysis of pXO1 and pXO2.</title>
        <authorList>
            <person name="Okinaka R.T."/>
            <person name="Cloud K."/>
            <person name="Hampton O."/>
            <person name="Hoffmaster A."/>
            <person name="Hill K.K."/>
            <person name="Keim P."/>
            <person name="Koehler T."/>
            <person name="Lamke G."/>
            <person name="Kumano S."/>
            <person name="Manter D."/>
            <person name="Martinez Y."/>
            <person name="Ricke D."/>
            <person name="Svensson R."/>
            <person name="Jackson P.J."/>
        </authorList>
    </citation>
    <scope>NUCLEOTIDE SEQUENCE [GENOMIC DNA]</scope>
    <source>
        <strain>Pasteur</strain>
    </source>
</reference>
<reference key="2">
    <citation type="journal article" date="2002" name="Science">
        <title>Comparative genome sequencing for discovery of novel polymorphisms in Bacillus anthracis.</title>
        <authorList>
            <person name="Read T.D."/>
            <person name="Salzberg S.L."/>
            <person name="Pop M."/>
            <person name="Shumway M.F."/>
            <person name="Umayam L."/>
            <person name="Jiang L."/>
            <person name="Holtzapple E."/>
            <person name="Busch J.D."/>
            <person name="Smith K.L."/>
            <person name="Schupp J.M."/>
            <person name="Solomon D."/>
            <person name="Keim P."/>
            <person name="Fraser C.M."/>
        </authorList>
    </citation>
    <scope>NUCLEOTIDE SEQUENCE [GENOMIC DNA]</scope>
    <source>
        <strain>Ames / isolate Florida / A2012</strain>
    </source>
</reference>
<reference key="3">
    <citation type="journal article" date="2009" name="J. Bacteriol.">
        <title>The complete genome sequence of Bacillus anthracis Ames 'Ancestor'.</title>
        <authorList>
            <person name="Ravel J."/>
            <person name="Jiang L."/>
            <person name="Stanley S.T."/>
            <person name="Wilson M.R."/>
            <person name="Decker R.S."/>
            <person name="Read T.D."/>
            <person name="Worsham P."/>
            <person name="Keim P.S."/>
            <person name="Salzberg S.L."/>
            <person name="Fraser-Liggett C.M."/>
            <person name="Rasko D.A."/>
        </authorList>
    </citation>
    <scope>NUCLEOTIDE SEQUENCE [LARGE SCALE GENOMIC DNA]</scope>
    <source>
        <strain>Ames ancestor</strain>
    </source>
</reference>
<name>Y6510_BACAN</name>
<feature type="chain" id="PRO_0000216832" description="Uncharacterized protein pXO2-11/BXB0010/GBAA_pXO2_0010">
    <location>
        <begin position="1"/>
        <end position="104"/>
    </location>
</feature>
<feature type="transmembrane region" description="Helical" evidence="1">
    <location>
        <begin position="16"/>
        <end position="36"/>
    </location>
</feature>
<feature type="transmembrane region" description="Helical" evidence="1">
    <location>
        <begin position="44"/>
        <end position="64"/>
    </location>
</feature>
<sequence>MEMMRNPKNTKQEIKLAFFYIIDGAIIALMLVLASYMPKVVPVGGFGRIMFYVLFGTFGLFLCIKPHNSPTNRNIFVILDMLKMDNKNYHPIEVNTISSETKRK</sequence>
<organism>
    <name type="scientific">Bacillus anthracis</name>
    <dbReference type="NCBI Taxonomy" id="1392"/>
    <lineage>
        <taxon>Bacteria</taxon>
        <taxon>Bacillati</taxon>
        <taxon>Bacillota</taxon>
        <taxon>Bacilli</taxon>
        <taxon>Bacillales</taxon>
        <taxon>Bacillaceae</taxon>
        <taxon>Bacillus</taxon>
        <taxon>Bacillus cereus group</taxon>
    </lineage>
</organism>
<evidence type="ECO:0000255" key="1"/>
<evidence type="ECO:0000305" key="2"/>
<comment type="subcellular location">
    <subcellularLocation>
        <location evidence="2">Cell membrane</location>
        <topology evidence="2">Multi-pass membrane protein</topology>
    </subcellularLocation>
</comment>
<dbReference type="EMBL" id="AF188935">
    <property type="protein sequence ID" value="AAF13616.1"/>
    <property type="molecule type" value="Genomic_DNA"/>
</dbReference>
<dbReference type="EMBL" id="AE011191">
    <property type="protein sequence ID" value="AAM26171.1"/>
    <property type="molecule type" value="Genomic_DNA"/>
</dbReference>
<dbReference type="EMBL" id="AE017335">
    <property type="protein sequence ID" value="AAT28940.2"/>
    <property type="molecule type" value="Genomic_DNA"/>
</dbReference>
<dbReference type="RefSeq" id="NP_053166.1">
    <property type="nucleotide sequence ID" value="NC_002146.1"/>
</dbReference>
<dbReference type="RefSeq" id="WP_000425702.1">
    <property type="nucleotide sequence ID" value="NZ_VTZL01000009.1"/>
</dbReference>
<dbReference type="GeneID" id="45025325"/>
<dbReference type="KEGG" id="banh:HYU01_29050"/>
<dbReference type="KEGG" id="bar:GBAA_pXO2_0010"/>
<dbReference type="HOGENOM" id="CLU_2271696_0_0_9"/>
<dbReference type="OMA" id="LCIKPAN"/>
<dbReference type="Proteomes" id="UP000000594">
    <property type="component" value="Plasmid pXO2"/>
</dbReference>
<dbReference type="GO" id="GO:0005886">
    <property type="term" value="C:plasma membrane"/>
    <property type="evidence" value="ECO:0007669"/>
    <property type="project" value="UniProtKB-SubCell"/>
</dbReference>